<proteinExistence type="inferred from homology"/>
<gene>
    <name type="ordered locus">CA_C2726</name>
</gene>
<keyword id="KW-0963">Cytoplasm</keyword>
<keyword id="KW-1185">Reference proteome</keyword>
<organism>
    <name type="scientific">Clostridium acetobutylicum (strain ATCC 824 / DSM 792 / JCM 1419 / IAM 19013 / LMG 5710 / NBRC 13948 / NRRL B-527 / VKM B-1787 / 2291 / W)</name>
    <dbReference type="NCBI Taxonomy" id="272562"/>
    <lineage>
        <taxon>Bacteria</taxon>
        <taxon>Bacillati</taxon>
        <taxon>Bacillota</taxon>
        <taxon>Clostridia</taxon>
        <taxon>Eubacteriales</taxon>
        <taxon>Clostridiaceae</taxon>
        <taxon>Clostridium</taxon>
    </lineage>
</organism>
<feature type="chain" id="PRO_0000094966" description="UPF0291 protein CA_C2726">
    <location>
        <begin position="1"/>
        <end position="55"/>
    </location>
</feature>
<sequence>MEMKKLIERINFLYKKSKEDGLTEEEKKEQDTLRREYIEIIKGNVKVQLSKVKKI</sequence>
<dbReference type="EMBL" id="AE001437">
    <property type="protein sequence ID" value="AAK80672.1"/>
    <property type="molecule type" value="Genomic_DNA"/>
</dbReference>
<dbReference type="PIR" id="E97235">
    <property type="entry name" value="E97235"/>
</dbReference>
<dbReference type="RefSeq" id="NP_349332.1">
    <property type="nucleotide sequence ID" value="NC_003030.1"/>
</dbReference>
<dbReference type="RefSeq" id="WP_010966013.1">
    <property type="nucleotide sequence ID" value="NC_003030.1"/>
</dbReference>
<dbReference type="SMR" id="Q97FL0"/>
<dbReference type="STRING" id="272562.CA_C2726"/>
<dbReference type="KEGG" id="cac:CA_C2726"/>
<dbReference type="PATRIC" id="fig|272562.8.peg.2915"/>
<dbReference type="eggNOG" id="COG4224">
    <property type="taxonomic scope" value="Bacteria"/>
</dbReference>
<dbReference type="HOGENOM" id="CLU_173137_3_1_9"/>
<dbReference type="OrthoDB" id="390105at2"/>
<dbReference type="Proteomes" id="UP000000814">
    <property type="component" value="Chromosome"/>
</dbReference>
<dbReference type="GO" id="GO:0005737">
    <property type="term" value="C:cytoplasm"/>
    <property type="evidence" value="ECO:0007669"/>
    <property type="project" value="UniProtKB-SubCell"/>
</dbReference>
<dbReference type="Gene3D" id="1.10.287.540">
    <property type="entry name" value="Helix hairpin bin"/>
    <property type="match status" value="1"/>
</dbReference>
<dbReference type="HAMAP" id="MF_01103">
    <property type="entry name" value="UPF0291"/>
    <property type="match status" value="1"/>
</dbReference>
<dbReference type="InterPro" id="IPR009242">
    <property type="entry name" value="DUF896"/>
</dbReference>
<dbReference type="PANTHER" id="PTHR37300">
    <property type="entry name" value="UPF0291 PROTEIN CBO2609/CLC_2481"/>
    <property type="match status" value="1"/>
</dbReference>
<dbReference type="PANTHER" id="PTHR37300:SF1">
    <property type="entry name" value="UPF0291 PROTEIN YNZC"/>
    <property type="match status" value="1"/>
</dbReference>
<dbReference type="Pfam" id="PF05979">
    <property type="entry name" value="DUF896"/>
    <property type="match status" value="1"/>
</dbReference>
<dbReference type="SUPFAM" id="SSF158221">
    <property type="entry name" value="YnzC-like"/>
    <property type="match status" value="1"/>
</dbReference>
<name>Y2726_CLOAB</name>
<accession>Q97FL0</accession>
<reference key="1">
    <citation type="journal article" date="2001" name="J. Bacteriol.">
        <title>Genome sequence and comparative analysis of the solvent-producing bacterium Clostridium acetobutylicum.</title>
        <authorList>
            <person name="Noelling J."/>
            <person name="Breton G."/>
            <person name="Omelchenko M.V."/>
            <person name="Makarova K.S."/>
            <person name="Zeng Q."/>
            <person name="Gibson R."/>
            <person name="Lee H.M."/>
            <person name="Dubois J."/>
            <person name="Qiu D."/>
            <person name="Hitti J."/>
            <person name="Wolf Y.I."/>
            <person name="Tatusov R.L."/>
            <person name="Sabathe F."/>
            <person name="Doucette-Stamm L.A."/>
            <person name="Soucaille P."/>
            <person name="Daly M.J."/>
            <person name="Bennett G.N."/>
            <person name="Koonin E.V."/>
            <person name="Smith D.R."/>
        </authorList>
    </citation>
    <scope>NUCLEOTIDE SEQUENCE [LARGE SCALE GENOMIC DNA]</scope>
    <source>
        <strain>ATCC 824 / DSM 792 / JCM 1419 / IAM 19013 / LMG 5710 / NBRC 13948 / NRRL B-527 / VKM B-1787 / 2291 / W</strain>
    </source>
</reference>
<protein>
    <recommendedName>
        <fullName evidence="1">UPF0291 protein CA_C2726</fullName>
    </recommendedName>
</protein>
<comment type="subcellular location">
    <subcellularLocation>
        <location evidence="1">Cytoplasm</location>
    </subcellularLocation>
</comment>
<comment type="similarity">
    <text evidence="1">Belongs to the UPF0291 family.</text>
</comment>
<evidence type="ECO:0000255" key="1">
    <source>
        <dbReference type="HAMAP-Rule" id="MF_01103"/>
    </source>
</evidence>